<gene>
    <name evidence="1" type="primary">rplY</name>
    <name evidence="1" type="synonym">ctc</name>
    <name type="ordered locus">NFA_48940</name>
</gene>
<dbReference type="EMBL" id="AP006618">
    <property type="protein sequence ID" value="BAD59746.1"/>
    <property type="molecule type" value="Genomic_DNA"/>
</dbReference>
<dbReference type="RefSeq" id="WP_011211429.1">
    <property type="nucleotide sequence ID" value="NC_006361.1"/>
</dbReference>
<dbReference type="SMR" id="Q5YPZ5"/>
<dbReference type="STRING" id="247156.NFA_48940"/>
<dbReference type="GeneID" id="61135489"/>
<dbReference type="KEGG" id="nfa:NFA_48940"/>
<dbReference type="eggNOG" id="COG1825">
    <property type="taxonomic scope" value="Bacteria"/>
</dbReference>
<dbReference type="HOGENOM" id="CLU_075939_1_0_11"/>
<dbReference type="OrthoDB" id="5242980at2"/>
<dbReference type="Proteomes" id="UP000006820">
    <property type="component" value="Chromosome"/>
</dbReference>
<dbReference type="GO" id="GO:0022625">
    <property type="term" value="C:cytosolic large ribosomal subunit"/>
    <property type="evidence" value="ECO:0007669"/>
    <property type="project" value="TreeGrafter"/>
</dbReference>
<dbReference type="GO" id="GO:0008097">
    <property type="term" value="F:5S rRNA binding"/>
    <property type="evidence" value="ECO:0007669"/>
    <property type="project" value="InterPro"/>
</dbReference>
<dbReference type="GO" id="GO:0003735">
    <property type="term" value="F:structural constituent of ribosome"/>
    <property type="evidence" value="ECO:0007669"/>
    <property type="project" value="InterPro"/>
</dbReference>
<dbReference type="GO" id="GO:0006412">
    <property type="term" value="P:translation"/>
    <property type="evidence" value="ECO:0007669"/>
    <property type="project" value="UniProtKB-UniRule"/>
</dbReference>
<dbReference type="CDD" id="cd00495">
    <property type="entry name" value="Ribosomal_L25_TL5_CTC"/>
    <property type="match status" value="1"/>
</dbReference>
<dbReference type="Gene3D" id="2.170.120.20">
    <property type="entry name" value="Ribosomal protein L25, beta domain"/>
    <property type="match status" value="1"/>
</dbReference>
<dbReference type="Gene3D" id="2.40.240.10">
    <property type="entry name" value="Ribosomal Protein L25, Chain P"/>
    <property type="match status" value="1"/>
</dbReference>
<dbReference type="HAMAP" id="MF_01334">
    <property type="entry name" value="Ribosomal_bL25_CTC"/>
    <property type="match status" value="1"/>
</dbReference>
<dbReference type="InterPro" id="IPR020056">
    <property type="entry name" value="Rbsml_bL25/Gln-tRNA_synth_N"/>
</dbReference>
<dbReference type="InterPro" id="IPR011035">
    <property type="entry name" value="Ribosomal_bL25/Gln-tRNA_synth"/>
</dbReference>
<dbReference type="InterPro" id="IPR020057">
    <property type="entry name" value="Ribosomal_bL25_b-dom"/>
</dbReference>
<dbReference type="InterPro" id="IPR037121">
    <property type="entry name" value="Ribosomal_bL25_C"/>
</dbReference>
<dbReference type="InterPro" id="IPR001021">
    <property type="entry name" value="Ribosomal_bL25_long"/>
</dbReference>
<dbReference type="InterPro" id="IPR029751">
    <property type="entry name" value="Ribosomal_L25_dom"/>
</dbReference>
<dbReference type="InterPro" id="IPR020930">
    <property type="entry name" value="Ribosomal_uL5_bac-type"/>
</dbReference>
<dbReference type="NCBIfam" id="TIGR00731">
    <property type="entry name" value="bL25_bact_ctc"/>
    <property type="match status" value="1"/>
</dbReference>
<dbReference type="NCBIfam" id="NF004131">
    <property type="entry name" value="PRK05618.2-1"/>
    <property type="match status" value="1"/>
</dbReference>
<dbReference type="PANTHER" id="PTHR33284">
    <property type="entry name" value="RIBOSOMAL PROTEIN L25/GLN-TRNA SYNTHETASE, ANTI-CODON-BINDING DOMAIN-CONTAINING PROTEIN"/>
    <property type="match status" value="1"/>
</dbReference>
<dbReference type="PANTHER" id="PTHR33284:SF1">
    <property type="entry name" value="RIBOSOMAL PROTEIN L25_GLN-TRNA SYNTHETASE, ANTI-CODON-BINDING DOMAIN-CONTAINING PROTEIN"/>
    <property type="match status" value="1"/>
</dbReference>
<dbReference type="Pfam" id="PF01386">
    <property type="entry name" value="Ribosomal_L25p"/>
    <property type="match status" value="1"/>
</dbReference>
<dbReference type="Pfam" id="PF14693">
    <property type="entry name" value="Ribosomal_TL5_C"/>
    <property type="match status" value="1"/>
</dbReference>
<dbReference type="SUPFAM" id="SSF50715">
    <property type="entry name" value="Ribosomal protein L25-like"/>
    <property type="match status" value="1"/>
</dbReference>
<reference key="1">
    <citation type="journal article" date="2004" name="Proc. Natl. Acad. Sci. U.S.A.">
        <title>The complete genomic sequence of Nocardia farcinica IFM 10152.</title>
        <authorList>
            <person name="Ishikawa J."/>
            <person name="Yamashita A."/>
            <person name="Mikami Y."/>
            <person name="Hoshino Y."/>
            <person name="Kurita H."/>
            <person name="Hotta K."/>
            <person name="Shiba T."/>
            <person name="Hattori M."/>
        </authorList>
    </citation>
    <scope>NUCLEOTIDE SEQUENCE [LARGE SCALE GENOMIC DNA]</scope>
    <source>
        <strain>IFM 10152</strain>
    </source>
</reference>
<evidence type="ECO:0000255" key="1">
    <source>
        <dbReference type="HAMAP-Rule" id="MF_01334"/>
    </source>
</evidence>
<evidence type="ECO:0000305" key="2"/>
<sequence length="200" mass="20836">MSDANLLEASVRTEFGKGAARRTRRAGNVPAVLYGHQSEPQHLSLNAQAFAAILREHGTNAVLNLDIEGKKQLALTKSVVVHPIRRYIEHADLLIVKRGEKVTADVAVTVTGDAAPGTLVTQEATTISIEAEALNLPEAIEVSVEDAEIGTQITAGSIALPQGVTLASDPELLVVNVIAAPAAEPAPGEEAAEAEGESAE</sequence>
<organism>
    <name type="scientific">Nocardia farcinica (strain IFM 10152)</name>
    <dbReference type="NCBI Taxonomy" id="247156"/>
    <lineage>
        <taxon>Bacteria</taxon>
        <taxon>Bacillati</taxon>
        <taxon>Actinomycetota</taxon>
        <taxon>Actinomycetes</taxon>
        <taxon>Mycobacteriales</taxon>
        <taxon>Nocardiaceae</taxon>
        <taxon>Nocardia</taxon>
    </lineage>
</organism>
<feature type="chain" id="PRO_0000181575" description="Large ribosomal subunit protein bL25">
    <location>
        <begin position="1"/>
        <end position="200"/>
    </location>
</feature>
<keyword id="KW-1185">Reference proteome</keyword>
<keyword id="KW-0687">Ribonucleoprotein</keyword>
<keyword id="KW-0689">Ribosomal protein</keyword>
<keyword id="KW-0694">RNA-binding</keyword>
<keyword id="KW-0699">rRNA-binding</keyword>
<proteinExistence type="inferred from homology"/>
<name>RL25_NOCFA</name>
<comment type="function">
    <text evidence="1">This is one of the proteins that binds to the 5S RNA in the ribosome where it forms part of the central protuberance.</text>
</comment>
<comment type="subunit">
    <text evidence="1">Part of the 50S ribosomal subunit; part of the 5S rRNA/L5/L18/L25 subcomplex. Contacts the 5S rRNA. Binds to the 5S rRNA independently of L5 and L18.</text>
</comment>
<comment type="similarity">
    <text evidence="1">Belongs to the bacterial ribosomal protein bL25 family. CTC subfamily.</text>
</comment>
<accession>Q5YPZ5</accession>
<protein>
    <recommendedName>
        <fullName evidence="1">Large ribosomal subunit protein bL25</fullName>
    </recommendedName>
    <alternativeName>
        <fullName evidence="2">50S ribosomal protein L25</fullName>
    </alternativeName>
    <alternativeName>
        <fullName evidence="1">General stress protein CTC</fullName>
    </alternativeName>
</protein>